<proteinExistence type="inferred from homology"/>
<comment type="function">
    <text evidence="1">Catalyzes the reversible isomerization of glucose-6-phosphate to fructose-6-phosphate.</text>
</comment>
<comment type="catalytic activity">
    <reaction evidence="1">
        <text>alpha-D-glucose 6-phosphate = beta-D-fructose 6-phosphate</text>
        <dbReference type="Rhea" id="RHEA:11816"/>
        <dbReference type="ChEBI" id="CHEBI:57634"/>
        <dbReference type="ChEBI" id="CHEBI:58225"/>
        <dbReference type="EC" id="5.3.1.9"/>
    </reaction>
</comment>
<comment type="pathway">
    <text evidence="1">Carbohydrate biosynthesis; gluconeogenesis.</text>
</comment>
<comment type="pathway">
    <text evidence="1">Carbohydrate degradation; glycolysis; D-glyceraldehyde 3-phosphate and glycerone phosphate from D-glucose: step 2/4.</text>
</comment>
<comment type="subcellular location">
    <subcellularLocation>
        <location evidence="1">Cytoplasm</location>
    </subcellularLocation>
</comment>
<comment type="similarity">
    <text evidence="1 2">Belongs to the GPI family.</text>
</comment>
<feature type="chain" id="PRO_0000180606" description="Glucose-6-phosphate isomerase">
    <location>
        <begin position="1"/>
        <end position="530"/>
    </location>
</feature>
<feature type="active site" description="Proton donor" evidence="1">
    <location>
        <position position="356"/>
    </location>
</feature>
<feature type="active site" evidence="1">
    <location>
        <position position="387"/>
    </location>
</feature>
<feature type="active site" evidence="1">
    <location>
        <position position="502"/>
    </location>
</feature>
<gene>
    <name evidence="1" type="primary">pgi</name>
    <name type="ordered locus">BB_0730</name>
</gene>
<reference key="1">
    <citation type="journal article" date="1997" name="Nature">
        <title>Genomic sequence of a Lyme disease spirochaete, Borrelia burgdorferi.</title>
        <authorList>
            <person name="Fraser C.M."/>
            <person name="Casjens S."/>
            <person name="Huang W.M."/>
            <person name="Sutton G.G."/>
            <person name="Clayton R.A."/>
            <person name="Lathigra R."/>
            <person name="White O."/>
            <person name="Ketchum K.A."/>
            <person name="Dodson R.J."/>
            <person name="Hickey E.K."/>
            <person name="Gwinn M.L."/>
            <person name="Dougherty B.A."/>
            <person name="Tomb J.-F."/>
            <person name="Fleischmann R.D."/>
            <person name="Richardson D.L."/>
            <person name="Peterson J.D."/>
            <person name="Kerlavage A.R."/>
            <person name="Quackenbush J."/>
            <person name="Salzberg S.L."/>
            <person name="Hanson M."/>
            <person name="van Vugt R."/>
            <person name="Palmer N."/>
            <person name="Adams M.D."/>
            <person name="Gocayne J.D."/>
            <person name="Weidman J.F."/>
            <person name="Utterback T.R."/>
            <person name="Watthey L."/>
            <person name="McDonald L.A."/>
            <person name="Artiach P."/>
            <person name="Bowman C."/>
            <person name="Garland S.A."/>
            <person name="Fujii C."/>
            <person name="Cotton M.D."/>
            <person name="Horst K."/>
            <person name="Roberts K.M."/>
            <person name="Hatch B."/>
            <person name="Smith H.O."/>
            <person name="Venter J.C."/>
        </authorList>
    </citation>
    <scope>NUCLEOTIDE SEQUENCE [LARGE SCALE GENOMIC DNA]</scope>
    <source>
        <strain>ATCC 35210 / DSM 4680 / CIP 102532 / B31</strain>
    </source>
</reference>
<evidence type="ECO:0000255" key="1">
    <source>
        <dbReference type="HAMAP-Rule" id="MF_00473"/>
    </source>
</evidence>
<evidence type="ECO:0000305" key="2"/>
<keyword id="KW-0963">Cytoplasm</keyword>
<keyword id="KW-0312">Gluconeogenesis</keyword>
<keyword id="KW-0324">Glycolysis</keyword>
<keyword id="KW-0413">Isomerase</keyword>
<keyword id="KW-1185">Reference proteome</keyword>
<sequence>MLNYKNLNELENFKILEGIAPEVLKTALTGKRIKEYDITIEGDSVHYNYASKQINETHLKIFQNLSDEANLIEKYKEVLDGEKINISENRKVLHHLTRGQIGKDVIEDNKENMREFFQSELEKIYNFAKQIHSGNIKSSNGKKFKNVVQIGIGGSSLGPKALYSSIKNYAKKHNLALMNGYFISNIDPDESEEVLSSINVDETLFIIVSKSGNTLETKANMQFLINKLKLNGIKEYKKQMVIITLKDSMLAIEEKGYLEYFFMHDSIGGRFSPTSAVGLTLLTLCFTEKVAKEILKGANEADKKSLNKNVKDNASLLAALISIYERNVLNYSSNCIIAYSKAMENFYLHLQQLEMESNGKSVNRFNETINYKTVRIIWGGIGTDVQHSFFQMLHQGTDIVPMDFIGFNETQLKEDVISDNSSSNDKLKANLIAQIIAFSKGKENSNKNKNFQGERPSALIYSKELTPYAIGAILSHYENKVMFEGFLLNINSFDQEGVQLGKIIANQILKNDNFKDEVIESYSKKILKKF</sequence>
<name>G6PI_BORBU</name>
<accession>O51672</accession>
<dbReference type="EC" id="5.3.1.9" evidence="1"/>
<dbReference type="EMBL" id="AE000783">
    <property type="protein sequence ID" value="AAC67084.2"/>
    <property type="molecule type" value="Genomic_DNA"/>
</dbReference>
<dbReference type="PIR" id="A70191">
    <property type="entry name" value="A70191"/>
</dbReference>
<dbReference type="RefSeq" id="NP_212864.2">
    <property type="nucleotide sequence ID" value="NC_001318.1"/>
</dbReference>
<dbReference type="RefSeq" id="WP_002660427.1">
    <property type="nucleotide sequence ID" value="NC_001318.1"/>
</dbReference>
<dbReference type="SMR" id="O51672"/>
<dbReference type="STRING" id="224326.BB_0730"/>
<dbReference type="PaxDb" id="224326-BB_0730"/>
<dbReference type="EnsemblBacteria" id="AAC67084">
    <property type="protein sequence ID" value="AAC67084"/>
    <property type="gene ID" value="BB_0730"/>
</dbReference>
<dbReference type="KEGG" id="bbu:BB_0730"/>
<dbReference type="PATRIC" id="fig|224326.49.peg.1122"/>
<dbReference type="HOGENOM" id="CLU_017947_3_1_12"/>
<dbReference type="OrthoDB" id="140919at2"/>
<dbReference type="UniPathway" id="UPA00109">
    <property type="reaction ID" value="UER00181"/>
</dbReference>
<dbReference type="UniPathway" id="UPA00138"/>
<dbReference type="Proteomes" id="UP000001807">
    <property type="component" value="Chromosome"/>
</dbReference>
<dbReference type="GO" id="GO:0005829">
    <property type="term" value="C:cytosol"/>
    <property type="evidence" value="ECO:0000314"/>
    <property type="project" value="CAFA"/>
</dbReference>
<dbReference type="GO" id="GO:0097367">
    <property type="term" value="F:carbohydrate derivative binding"/>
    <property type="evidence" value="ECO:0007669"/>
    <property type="project" value="InterPro"/>
</dbReference>
<dbReference type="GO" id="GO:0004347">
    <property type="term" value="F:glucose-6-phosphate isomerase activity"/>
    <property type="evidence" value="ECO:0007669"/>
    <property type="project" value="UniProtKB-UniRule"/>
</dbReference>
<dbReference type="GO" id="GO:0048029">
    <property type="term" value="F:monosaccharide binding"/>
    <property type="evidence" value="ECO:0007669"/>
    <property type="project" value="TreeGrafter"/>
</dbReference>
<dbReference type="GO" id="GO:0006094">
    <property type="term" value="P:gluconeogenesis"/>
    <property type="evidence" value="ECO:0007669"/>
    <property type="project" value="UniProtKB-UniRule"/>
</dbReference>
<dbReference type="GO" id="GO:0051156">
    <property type="term" value="P:glucose 6-phosphate metabolic process"/>
    <property type="evidence" value="ECO:0007669"/>
    <property type="project" value="TreeGrafter"/>
</dbReference>
<dbReference type="GO" id="GO:0006096">
    <property type="term" value="P:glycolytic process"/>
    <property type="evidence" value="ECO:0007669"/>
    <property type="project" value="UniProtKB-UniRule"/>
</dbReference>
<dbReference type="CDD" id="cd05015">
    <property type="entry name" value="SIS_PGI_1"/>
    <property type="match status" value="1"/>
</dbReference>
<dbReference type="CDD" id="cd05016">
    <property type="entry name" value="SIS_PGI_2"/>
    <property type="match status" value="1"/>
</dbReference>
<dbReference type="FunFam" id="3.40.50.10490:FF:000086">
    <property type="entry name" value="Glucose-6-phosphate isomerase"/>
    <property type="match status" value="1"/>
</dbReference>
<dbReference type="Gene3D" id="1.10.1390.10">
    <property type="match status" value="1"/>
</dbReference>
<dbReference type="Gene3D" id="3.40.50.10490">
    <property type="entry name" value="Glucose-6-phosphate isomerase like protein, domain 1"/>
    <property type="match status" value="2"/>
</dbReference>
<dbReference type="HAMAP" id="MF_00473">
    <property type="entry name" value="G6P_isomerase"/>
    <property type="match status" value="1"/>
</dbReference>
<dbReference type="InterPro" id="IPR001672">
    <property type="entry name" value="G6P_Isomerase"/>
</dbReference>
<dbReference type="InterPro" id="IPR023096">
    <property type="entry name" value="G6P_Isomerase_C"/>
</dbReference>
<dbReference type="InterPro" id="IPR018189">
    <property type="entry name" value="Phosphoglucose_isomerase_CS"/>
</dbReference>
<dbReference type="InterPro" id="IPR046348">
    <property type="entry name" value="SIS_dom_sf"/>
</dbReference>
<dbReference type="InterPro" id="IPR035476">
    <property type="entry name" value="SIS_PGI_1"/>
</dbReference>
<dbReference type="InterPro" id="IPR035482">
    <property type="entry name" value="SIS_PGI_2"/>
</dbReference>
<dbReference type="NCBIfam" id="NF010695">
    <property type="entry name" value="PRK14095.1"/>
    <property type="match status" value="1"/>
</dbReference>
<dbReference type="PANTHER" id="PTHR11469">
    <property type="entry name" value="GLUCOSE-6-PHOSPHATE ISOMERASE"/>
    <property type="match status" value="1"/>
</dbReference>
<dbReference type="PANTHER" id="PTHR11469:SF1">
    <property type="entry name" value="GLUCOSE-6-PHOSPHATE ISOMERASE"/>
    <property type="match status" value="1"/>
</dbReference>
<dbReference type="Pfam" id="PF00342">
    <property type="entry name" value="PGI"/>
    <property type="match status" value="1"/>
</dbReference>
<dbReference type="PRINTS" id="PR00662">
    <property type="entry name" value="G6PISOMERASE"/>
</dbReference>
<dbReference type="SUPFAM" id="SSF53697">
    <property type="entry name" value="SIS domain"/>
    <property type="match status" value="1"/>
</dbReference>
<dbReference type="PROSITE" id="PS00765">
    <property type="entry name" value="P_GLUCOSE_ISOMERASE_1"/>
    <property type="match status" value="1"/>
</dbReference>
<dbReference type="PROSITE" id="PS00174">
    <property type="entry name" value="P_GLUCOSE_ISOMERASE_2"/>
    <property type="match status" value="1"/>
</dbReference>
<dbReference type="PROSITE" id="PS51463">
    <property type="entry name" value="P_GLUCOSE_ISOMERASE_3"/>
    <property type="match status" value="1"/>
</dbReference>
<organism>
    <name type="scientific">Borreliella burgdorferi (strain ATCC 35210 / DSM 4680 / CIP 102532 / B31)</name>
    <name type="common">Borrelia burgdorferi</name>
    <dbReference type="NCBI Taxonomy" id="224326"/>
    <lineage>
        <taxon>Bacteria</taxon>
        <taxon>Pseudomonadati</taxon>
        <taxon>Spirochaetota</taxon>
        <taxon>Spirochaetia</taxon>
        <taxon>Spirochaetales</taxon>
        <taxon>Borreliaceae</taxon>
        <taxon>Borreliella</taxon>
    </lineage>
</organism>
<protein>
    <recommendedName>
        <fullName evidence="1">Glucose-6-phosphate isomerase</fullName>
        <shortName evidence="1">GPI</shortName>
        <ecNumber evidence="1">5.3.1.9</ecNumber>
    </recommendedName>
    <alternativeName>
        <fullName evidence="1">Phosphoglucose isomerase</fullName>
        <shortName evidence="1">PGI</shortName>
    </alternativeName>
    <alternativeName>
        <fullName evidence="1">Phosphohexose isomerase</fullName>
        <shortName evidence="1">PHI</shortName>
    </alternativeName>
</protein>